<evidence type="ECO:0000250" key="1">
    <source>
        <dbReference type="UniProtKB" id="O64752"/>
    </source>
</evidence>
<evidence type="ECO:0000250" key="2">
    <source>
        <dbReference type="UniProtKB" id="Q8GUI6"/>
    </source>
</evidence>
<evidence type="ECO:0000255" key="3">
    <source>
        <dbReference type="PROSITE-ProRule" id="PRU00024"/>
    </source>
</evidence>
<evidence type="ECO:0000255" key="4">
    <source>
        <dbReference type="PROSITE-ProRule" id="PRU00175"/>
    </source>
</evidence>
<evidence type="ECO:0000255" key="5">
    <source>
        <dbReference type="PROSITE-ProRule" id="PRU00538"/>
    </source>
</evidence>
<evidence type="ECO:0000255" key="6">
    <source>
        <dbReference type="PROSITE-ProRule" id="PRU00768"/>
    </source>
</evidence>
<evidence type="ECO:0000256" key="7">
    <source>
        <dbReference type="SAM" id="MobiDB-lite"/>
    </source>
</evidence>
<evidence type="ECO:0000269" key="8">
    <source>
    </source>
</evidence>
<evidence type="ECO:0000303" key="9">
    <source>
    </source>
</evidence>
<evidence type="ECO:0000305" key="10"/>
<evidence type="ECO:0000312" key="11">
    <source>
        <dbReference type="Araport" id="AT1G62310"/>
    </source>
</evidence>
<evidence type="ECO:0000312" key="12">
    <source>
        <dbReference type="EMBL" id="AAF70852.1"/>
    </source>
</evidence>
<comment type="function">
    <text evidence="1">May function as histone H3 lysine demethylase and be involved in regulation of gene expression.</text>
</comment>
<comment type="cofactor">
    <cofactor evidence="2">
        <name>Fe(2+)</name>
        <dbReference type="ChEBI" id="CHEBI:29033"/>
    </cofactor>
    <text evidence="2">Binds 1 Fe(2+) ion per subunit.</text>
</comment>
<comment type="subcellular location">
    <subcellularLocation>
        <location evidence="6">Nucleus</location>
    </subcellularLocation>
</comment>
<comment type="tissue specificity">
    <text evidence="8">Expressed in inflorescences, roots, siliques, leaves and stems.</text>
</comment>
<comment type="similarity">
    <text evidence="10">Belongs to the JARID1 histone demethylase family.</text>
</comment>
<comment type="sequence caution" evidence="10">
    <conflict type="erroneous gene model prediction">
        <sequence resource="EMBL-CDS" id="AAF70852"/>
    </conflict>
</comment>
<dbReference type="EC" id="1.14.11.-" evidence="1"/>
<dbReference type="EMBL" id="AC003113">
    <property type="protein sequence ID" value="AAF70852.1"/>
    <property type="status" value="ALT_SEQ"/>
    <property type="molecule type" value="Genomic_DNA"/>
</dbReference>
<dbReference type="EMBL" id="CP002684">
    <property type="protein sequence ID" value="AEE33952.1"/>
    <property type="molecule type" value="Genomic_DNA"/>
</dbReference>
<dbReference type="EMBL" id="AB493515">
    <property type="protein sequence ID" value="BAH30353.1"/>
    <property type="molecule type" value="mRNA"/>
</dbReference>
<dbReference type="PIR" id="T01440">
    <property type="entry name" value="T01440"/>
</dbReference>
<dbReference type="RefSeq" id="NP_176421.1">
    <property type="nucleotide sequence ID" value="NM_104911.3"/>
</dbReference>
<dbReference type="SMR" id="C0SV12"/>
<dbReference type="FunCoup" id="C0SV12">
    <property type="interactions" value="167"/>
</dbReference>
<dbReference type="STRING" id="3702.C0SV12"/>
<dbReference type="iPTMnet" id="C0SV12"/>
<dbReference type="PaxDb" id="3702-AT1G62310.1"/>
<dbReference type="ProteomicsDB" id="191564"/>
<dbReference type="EnsemblPlants" id="AT1G62310.1">
    <property type="protein sequence ID" value="AT1G62310.1"/>
    <property type="gene ID" value="AT1G62310"/>
</dbReference>
<dbReference type="GeneID" id="842529"/>
<dbReference type="Gramene" id="AT1G62310.1">
    <property type="protein sequence ID" value="AT1G62310.1"/>
    <property type="gene ID" value="AT1G62310"/>
</dbReference>
<dbReference type="KEGG" id="ath:AT1G62310"/>
<dbReference type="Araport" id="AT1G62310"/>
<dbReference type="TAIR" id="AT1G62310"/>
<dbReference type="eggNOG" id="KOG1356">
    <property type="taxonomic scope" value="Eukaryota"/>
</dbReference>
<dbReference type="HOGENOM" id="CLU_001811_2_1_1"/>
<dbReference type="InParanoid" id="C0SV12"/>
<dbReference type="OMA" id="CNCTRCN"/>
<dbReference type="PRO" id="PR:C0SV12"/>
<dbReference type="Proteomes" id="UP000006548">
    <property type="component" value="Chromosome 1"/>
</dbReference>
<dbReference type="ExpressionAtlas" id="C0SV12">
    <property type="expression patterns" value="baseline and differential"/>
</dbReference>
<dbReference type="GO" id="GO:0005634">
    <property type="term" value="C:nucleus"/>
    <property type="evidence" value="ECO:0000314"/>
    <property type="project" value="TAIR"/>
</dbReference>
<dbReference type="GO" id="GO:0031490">
    <property type="term" value="F:chromatin DNA binding"/>
    <property type="evidence" value="ECO:0000314"/>
    <property type="project" value="TAIR"/>
</dbReference>
<dbReference type="GO" id="GO:0032454">
    <property type="term" value="F:histone H3K9 demethylase activity"/>
    <property type="evidence" value="ECO:0007669"/>
    <property type="project" value="InterPro"/>
</dbReference>
<dbReference type="GO" id="GO:0016491">
    <property type="term" value="F:oxidoreductase activity"/>
    <property type="evidence" value="ECO:0007669"/>
    <property type="project" value="UniProtKB-KW"/>
</dbReference>
<dbReference type="GO" id="GO:0008270">
    <property type="term" value="F:zinc ion binding"/>
    <property type="evidence" value="ECO:0007669"/>
    <property type="project" value="UniProtKB-KW"/>
</dbReference>
<dbReference type="GO" id="GO:2000039">
    <property type="term" value="P:regulation of trichome morphogenesis"/>
    <property type="evidence" value="ECO:0000315"/>
    <property type="project" value="TAIR"/>
</dbReference>
<dbReference type="CDD" id="cd02208">
    <property type="entry name" value="cupin_RmlC-like"/>
    <property type="match status" value="1"/>
</dbReference>
<dbReference type="FunFam" id="2.60.120.650:FF:000026">
    <property type="entry name" value="Transcription factor jumonji domain-containing protein"/>
    <property type="match status" value="1"/>
</dbReference>
<dbReference type="Gene3D" id="2.60.120.650">
    <property type="entry name" value="Cupin"/>
    <property type="match status" value="1"/>
</dbReference>
<dbReference type="InterPro" id="IPR045109">
    <property type="entry name" value="JHDM2-like"/>
</dbReference>
<dbReference type="InterPro" id="IPR003347">
    <property type="entry name" value="JmjC_dom"/>
</dbReference>
<dbReference type="InterPro" id="IPR018866">
    <property type="entry name" value="Znf-4CXXC_R1"/>
</dbReference>
<dbReference type="InterPro" id="IPR001841">
    <property type="entry name" value="Znf_RING"/>
</dbReference>
<dbReference type="PANTHER" id="PTHR12549">
    <property type="entry name" value="JMJC DOMAIN-CONTAINING HISTONE DEMETHYLATION PROTEIN"/>
    <property type="match status" value="1"/>
</dbReference>
<dbReference type="PANTHER" id="PTHR12549:SF59">
    <property type="entry name" value="LYSINE-SPECIFIC DEMETHYLASE JMJ29"/>
    <property type="match status" value="1"/>
</dbReference>
<dbReference type="Pfam" id="PF02373">
    <property type="entry name" value="JmjC"/>
    <property type="match status" value="1"/>
</dbReference>
<dbReference type="Pfam" id="PF10497">
    <property type="entry name" value="zf-4CXXC_R1"/>
    <property type="match status" value="1"/>
</dbReference>
<dbReference type="SMART" id="SM00558">
    <property type="entry name" value="JmjC"/>
    <property type="match status" value="1"/>
</dbReference>
<dbReference type="SUPFAM" id="SSF51197">
    <property type="entry name" value="Clavaminate synthase-like"/>
    <property type="match status" value="1"/>
</dbReference>
<dbReference type="PROSITE" id="PS51184">
    <property type="entry name" value="JMJC"/>
    <property type="match status" value="1"/>
</dbReference>
<dbReference type="PROSITE" id="PS50089">
    <property type="entry name" value="ZF_RING_2"/>
    <property type="match status" value="1"/>
</dbReference>
<keyword id="KW-0408">Iron</keyword>
<keyword id="KW-0479">Metal-binding</keyword>
<keyword id="KW-0539">Nucleus</keyword>
<keyword id="KW-0560">Oxidoreductase</keyword>
<keyword id="KW-1185">Reference proteome</keyword>
<keyword id="KW-0804">Transcription</keyword>
<keyword id="KW-0805">Transcription regulation</keyword>
<keyword id="KW-0862">Zinc</keyword>
<keyword id="KW-0863">Zinc-finger</keyword>
<protein>
    <recommendedName>
        <fullName evidence="9">Lysine-specific demethylase JMJ29</fullName>
        <ecNumber evidence="1">1.14.11.-</ecNumber>
    </recommendedName>
    <alternativeName>
        <fullName evidence="9">Jumonji domain-containing protein 29</fullName>
        <shortName evidence="9">AtJMJ29</shortName>
        <shortName evidence="9">Protein JUMONJI 29</shortName>
    </alternativeName>
    <alternativeName>
        <fullName evidence="9">Lysine-specific histone demethylase JMJ29</fullName>
    </alternativeName>
    <alternativeName>
        <fullName evidence="10">[histone H3]-trimethyl-L-lysine monodemethylase JMJ29</fullName>
    </alternativeName>
</protein>
<proteinExistence type="evidence at transcript level"/>
<accession>C0SV12</accession>
<accession>O48794</accession>
<feature type="chain" id="PRO_0000456195" description="Lysine-specific demethylase JMJ29">
    <location>
        <begin position="1"/>
        <end position="883"/>
    </location>
</feature>
<feature type="domain" description="JmjC" evidence="5">
    <location>
        <begin position="632"/>
        <end position="863"/>
    </location>
</feature>
<feature type="zinc finger region" description="RING-type; degenerate" evidence="4">
    <location>
        <begin position="209"/>
        <end position="256"/>
    </location>
</feature>
<feature type="zinc finger region" description="B box-type; atypical" evidence="3">
    <location>
        <begin position="333"/>
        <end position="392"/>
    </location>
</feature>
<feature type="region of interest" description="Disordered" evidence="7">
    <location>
        <begin position="30"/>
        <end position="62"/>
    </location>
</feature>
<feature type="region of interest" description="Disordered" evidence="7">
    <location>
        <begin position="161"/>
        <end position="204"/>
    </location>
</feature>
<feature type="region of interest" description="Disordered" evidence="7">
    <location>
        <begin position="713"/>
        <end position="743"/>
    </location>
</feature>
<feature type="short sequence motif" description="Nuclear localization signal" evidence="6">
    <location>
        <begin position="755"/>
        <end position="762"/>
    </location>
</feature>
<feature type="compositionally biased region" description="Low complexity" evidence="7">
    <location>
        <begin position="34"/>
        <end position="43"/>
    </location>
</feature>
<feature type="compositionally biased region" description="Polar residues" evidence="7">
    <location>
        <begin position="161"/>
        <end position="172"/>
    </location>
</feature>
<feature type="compositionally biased region" description="Polar residues" evidence="7">
    <location>
        <begin position="184"/>
        <end position="204"/>
    </location>
</feature>
<feature type="compositionally biased region" description="Acidic residues" evidence="7">
    <location>
        <begin position="722"/>
        <end position="735"/>
    </location>
</feature>
<feature type="binding site" evidence="4">
    <location>
        <position position="209"/>
    </location>
    <ligand>
        <name>Zn(2+)</name>
        <dbReference type="ChEBI" id="CHEBI:29105"/>
        <label>1</label>
    </ligand>
</feature>
<feature type="binding site" evidence="4">
    <location>
        <position position="212"/>
    </location>
    <ligand>
        <name>Zn(2+)</name>
        <dbReference type="ChEBI" id="CHEBI:29105"/>
        <label>1</label>
    </ligand>
</feature>
<feature type="binding site" evidence="4">
    <location>
        <position position="223"/>
    </location>
    <ligand>
        <name>Zn(2+)</name>
        <dbReference type="ChEBI" id="CHEBI:29105"/>
        <label>2</label>
    </ligand>
</feature>
<feature type="binding site" evidence="4">
    <location>
        <position position="226"/>
    </location>
    <ligand>
        <name>Zn(2+)</name>
        <dbReference type="ChEBI" id="CHEBI:29105"/>
        <label>2</label>
    </ligand>
</feature>
<feature type="binding site" evidence="4">
    <location>
        <position position="232"/>
    </location>
    <ligand>
        <name>Zn(2+)</name>
        <dbReference type="ChEBI" id="CHEBI:29105"/>
        <label>1</label>
    </ligand>
</feature>
<feature type="binding site" evidence="4">
    <location>
        <position position="235"/>
    </location>
    <ligand>
        <name>Zn(2+)</name>
        <dbReference type="ChEBI" id="CHEBI:29105"/>
        <label>1</label>
    </ligand>
</feature>
<feature type="binding site" evidence="4">
    <location>
        <position position="252"/>
    </location>
    <ligand>
        <name>Zn(2+)</name>
        <dbReference type="ChEBI" id="CHEBI:29105"/>
        <label>2</label>
    </ligand>
</feature>
<feature type="binding site" evidence="4">
    <location>
        <position position="255"/>
    </location>
    <ligand>
        <name>Zn(2+)</name>
        <dbReference type="ChEBI" id="CHEBI:29105"/>
        <label>2</label>
    </ligand>
</feature>
<feature type="binding site" evidence="3">
    <location>
        <position position="338"/>
    </location>
    <ligand>
        <name>Zn(2+)</name>
        <dbReference type="ChEBI" id="CHEBI:29105"/>
        <label>3</label>
    </ligand>
</feature>
<feature type="binding site" evidence="3">
    <location>
        <position position="341"/>
    </location>
    <ligand>
        <name>Zn(2+)</name>
        <dbReference type="ChEBI" id="CHEBI:29105"/>
        <label>3</label>
    </ligand>
</feature>
<feature type="binding site" evidence="3">
    <location>
        <position position="363"/>
    </location>
    <ligand>
        <name>Zn(2+)</name>
        <dbReference type="ChEBI" id="CHEBI:29105"/>
        <label>3</label>
    </ligand>
</feature>
<feature type="binding site" evidence="3">
    <location>
        <position position="381"/>
    </location>
    <ligand>
        <name>Zn(2+)</name>
        <dbReference type="ChEBI" id="CHEBI:29105"/>
        <label>3</label>
    </ligand>
</feature>
<feature type="binding site" evidence="5">
    <location>
        <position position="676"/>
    </location>
    <ligand>
        <name>Fe cation</name>
        <dbReference type="ChEBI" id="CHEBI:24875"/>
        <note>catalytic</note>
    </ligand>
</feature>
<feature type="binding site" evidence="5">
    <location>
        <position position="678"/>
    </location>
    <ligand>
        <name>Fe cation</name>
        <dbReference type="ChEBI" id="CHEBI:24875"/>
        <note>catalytic</note>
    </ligand>
</feature>
<feature type="binding site" evidence="5">
    <location>
        <position position="831"/>
    </location>
    <ligand>
        <name>Fe cation</name>
        <dbReference type="ChEBI" id="CHEBI:24875"/>
        <note>catalytic</note>
    </ligand>
</feature>
<sequence length="883" mass="101477">MDSGVKLEHMNCFQLSYQYSWTTRKKRTLKPFMSKGSSPSSSSDSRKRKLSRAEDSDDSAVKRNAKRRRKICKVEEYYEDDDCILSDWVQRNTAKRIDKRNEEVEVMVKIESGDDCTIGKWFSDVSSKRKDKRQVEVDEDEEWEEEVTLCSKIKATSSRSRTHSLSANSPENVTDVISPCRSRSPASNVSDSIQKNDCTSSRKQSGPICHQCLKGERITLLICSECEKTMFCLQCIRKWYPNLSEDDVVEKCPLCRQNCNCSKCLHLNGLIETSKRELAKSERRHHLQYLITLMLPFLNKLSIFQKLEIEFEATVQGKLPSEVEITAAISYTDERVYCDHCATSIVDLHRSCPKCSYELCLKCCQEIREGSLSERPEMKFHYVDRGHRYMHGLDAAEPSLSSTFEDEEANPSDAKWSLGENGSITCAPEKLGGCGERMLELRRILPLTWMSDLEHKAETFLSSYNISPRMLNCRCSSLETELTRKSASRTTSSDNYLFCPESLGVLKEEELLHFQEHWAKGEPVIVRNALDNTPGLSWEPMVMWRALCENVNSTSSSEMSQVKAIDCLANCEVEINTRQFFEGYSKGRTYENFWPEMLKLKDWPPSDKFEDLLPRHCDEFISALPFQEYSDPRTGILNIATKLPEGFIKPDLGPKTYIAYGIPDELGRGDSVTKLHCDMSDAVNILTHTAEVTLSQEQISSVKALKQKHKLQNKVDKQSTEDCNEKEEEEEEELNMPEISSNENEETGSALWDIFRREDVPKLEEYLRKHCKEFRHTYCSPVTKVYHPIHDQSCYLTLEHKRKLKAEYGIEPWTFVQKLGEAVFIPAGCPHQVRNLKSCTKVAVDFVSPENIHECLRLTEEFRQLPKNHKAREDKLEASLLSL</sequence>
<gene>
    <name evidence="9" type="primary">JMJ29</name>
    <name evidence="11" type="ordered locus">At1g62310</name>
    <name evidence="12" type="ORF">F24O1.3</name>
</gene>
<name>JMJ29_ARATH</name>
<reference key="1">
    <citation type="journal article" date="2000" name="Nature">
        <title>Sequence and analysis of chromosome 1 of the plant Arabidopsis thaliana.</title>
        <authorList>
            <person name="Theologis A."/>
            <person name="Ecker J.R."/>
            <person name="Palm C.J."/>
            <person name="Federspiel N.A."/>
            <person name="Kaul S."/>
            <person name="White O."/>
            <person name="Alonso J."/>
            <person name="Altafi H."/>
            <person name="Araujo R."/>
            <person name="Bowman C.L."/>
            <person name="Brooks S.Y."/>
            <person name="Buehler E."/>
            <person name="Chan A."/>
            <person name="Chao Q."/>
            <person name="Chen H."/>
            <person name="Cheuk R.F."/>
            <person name="Chin C.W."/>
            <person name="Chung M.K."/>
            <person name="Conn L."/>
            <person name="Conway A.B."/>
            <person name="Conway A.R."/>
            <person name="Creasy T.H."/>
            <person name="Dewar K."/>
            <person name="Dunn P."/>
            <person name="Etgu P."/>
            <person name="Feldblyum T.V."/>
            <person name="Feng J.-D."/>
            <person name="Fong B."/>
            <person name="Fujii C.Y."/>
            <person name="Gill J.E."/>
            <person name="Goldsmith A.D."/>
            <person name="Haas B."/>
            <person name="Hansen N.F."/>
            <person name="Hughes B."/>
            <person name="Huizar L."/>
            <person name="Hunter J.L."/>
            <person name="Jenkins J."/>
            <person name="Johnson-Hopson C."/>
            <person name="Khan S."/>
            <person name="Khaykin E."/>
            <person name="Kim C.J."/>
            <person name="Koo H.L."/>
            <person name="Kremenetskaia I."/>
            <person name="Kurtz D.B."/>
            <person name="Kwan A."/>
            <person name="Lam B."/>
            <person name="Langin-Hooper S."/>
            <person name="Lee A."/>
            <person name="Lee J.M."/>
            <person name="Lenz C.A."/>
            <person name="Li J.H."/>
            <person name="Li Y.-P."/>
            <person name="Lin X."/>
            <person name="Liu S.X."/>
            <person name="Liu Z.A."/>
            <person name="Luros J.S."/>
            <person name="Maiti R."/>
            <person name="Marziali A."/>
            <person name="Militscher J."/>
            <person name="Miranda M."/>
            <person name="Nguyen M."/>
            <person name="Nierman W.C."/>
            <person name="Osborne B.I."/>
            <person name="Pai G."/>
            <person name="Peterson J."/>
            <person name="Pham P.K."/>
            <person name="Rizzo M."/>
            <person name="Rooney T."/>
            <person name="Rowley D."/>
            <person name="Sakano H."/>
            <person name="Salzberg S.L."/>
            <person name="Schwartz J.R."/>
            <person name="Shinn P."/>
            <person name="Southwick A.M."/>
            <person name="Sun H."/>
            <person name="Tallon L.J."/>
            <person name="Tambunga G."/>
            <person name="Toriumi M.J."/>
            <person name="Town C.D."/>
            <person name="Utterback T."/>
            <person name="Van Aken S."/>
            <person name="Vaysberg M."/>
            <person name="Vysotskaia V.S."/>
            <person name="Walker M."/>
            <person name="Wu D."/>
            <person name="Yu G."/>
            <person name="Fraser C.M."/>
            <person name="Venter J.C."/>
            <person name="Davis R.W."/>
        </authorList>
    </citation>
    <scope>NUCLEOTIDE SEQUENCE [LARGE SCALE GENOMIC DNA]</scope>
    <source>
        <strain>cv. Columbia</strain>
    </source>
</reference>
<reference key="2">
    <citation type="journal article" date="2017" name="Plant J.">
        <title>Araport11: a complete reannotation of the Arabidopsis thaliana reference genome.</title>
        <authorList>
            <person name="Cheng C.Y."/>
            <person name="Krishnakumar V."/>
            <person name="Chan A.P."/>
            <person name="Thibaud-Nissen F."/>
            <person name="Schobel S."/>
            <person name="Town C.D."/>
        </authorList>
    </citation>
    <scope>GENOME REANNOTATION</scope>
    <source>
        <strain>cv. Columbia</strain>
    </source>
</reference>
<reference key="3">
    <citation type="submission" date="2009-03" db="EMBL/GenBank/DDBJ databases">
        <title>ORF cloning and analysis of Arabidopsis transcription factor genes.</title>
        <authorList>
            <person name="Fujita M."/>
        </authorList>
    </citation>
    <scope>NUCLEOTIDE SEQUENCE [LARGE SCALE MRNA]</scope>
</reference>
<reference key="4">
    <citation type="journal article" date="2008" name="J. Integr. Plant Biol.">
        <title>Comparative analysis of JmjC domain-containing proteins reveals the potential histone demethylases in Arabidopsis and rice.</title>
        <authorList>
            <person name="Lu F."/>
            <person name="Li G."/>
            <person name="Cui X."/>
            <person name="Liu C."/>
            <person name="Wang X.-J."/>
            <person name="Cao X."/>
        </authorList>
    </citation>
    <scope>GENE FAMILY</scope>
    <scope>NOMENCLATURE</scope>
    <scope>TISSUE SPECIFICITY</scope>
</reference>
<organism>
    <name type="scientific">Arabidopsis thaliana</name>
    <name type="common">Mouse-ear cress</name>
    <dbReference type="NCBI Taxonomy" id="3702"/>
    <lineage>
        <taxon>Eukaryota</taxon>
        <taxon>Viridiplantae</taxon>
        <taxon>Streptophyta</taxon>
        <taxon>Embryophyta</taxon>
        <taxon>Tracheophyta</taxon>
        <taxon>Spermatophyta</taxon>
        <taxon>Magnoliopsida</taxon>
        <taxon>eudicotyledons</taxon>
        <taxon>Gunneridae</taxon>
        <taxon>Pentapetalae</taxon>
        <taxon>rosids</taxon>
        <taxon>malvids</taxon>
        <taxon>Brassicales</taxon>
        <taxon>Brassicaceae</taxon>
        <taxon>Camelineae</taxon>
        <taxon>Arabidopsis</taxon>
    </lineage>
</organism>